<feature type="chain" id="PRO_0000071200" description="Uncharacterized protein R73">
    <location>
        <begin position="1"/>
        <end position="232"/>
    </location>
</feature>
<reference key="1">
    <citation type="journal article" date="2004" name="Science">
        <title>The 1.2-megabase genome sequence of Mimivirus.</title>
        <authorList>
            <person name="Raoult D."/>
            <person name="Audic S."/>
            <person name="Robert C."/>
            <person name="Abergel C."/>
            <person name="Renesto P."/>
            <person name="Ogata H."/>
            <person name="La Scola B."/>
            <person name="Susan M."/>
            <person name="Claverie J.-M."/>
        </authorList>
    </citation>
    <scope>NUCLEOTIDE SEQUENCE [LARGE SCALE GENOMIC DNA]</scope>
    <source>
        <strain>Rowbotham-Bradford</strain>
    </source>
</reference>
<evidence type="ECO:0000305" key="1"/>
<sequence>MQSTDISTNKIKFTVDKFNYVVKLSVLKNTHKITIKCTHNEEFYCWTFMTCEIIKSDYSSNSFYYDSSNSSINENINDENSNFLSINICPEMLFNILTAFKNNMLDKIYQINFPQDFDSVKSNLSILLTITLPLMNNFPDIKTIILEPKNINEPKRCSLKLMRQSFIIQQKNNEKFEKLSEKIEKMGKELTELQTVHNGLVKYIKEKYVRLDDLVDFVNKRDIDVITQVKKN</sequence>
<proteinExistence type="inferred from homology"/>
<name>YR073_MIMIV</name>
<comment type="similarity">
    <text evidence="1">Belongs to the mimivirus R73/L269/L862 family.</text>
</comment>
<organism>
    <name type="scientific">Acanthamoeba polyphaga mimivirus</name>
    <name type="common">APMV</name>
    <dbReference type="NCBI Taxonomy" id="212035"/>
    <lineage>
        <taxon>Viruses</taxon>
        <taxon>Varidnaviria</taxon>
        <taxon>Bamfordvirae</taxon>
        <taxon>Nucleocytoviricota</taxon>
        <taxon>Megaviricetes</taxon>
        <taxon>Imitervirales</taxon>
        <taxon>Mimiviridae</taxon>
        <taxon>Megamimivirinae</taxon>
        <taxon>Mimivirus</taxon>
        <taxon>Mimivirus bradfordmassiliense</taxon>
    </lineage>
</organism>
<dbReference type="EMBL" id="AY653733">
    <property type="protein sequence ID" value="AAV50348.1"/>
    <property type="molecule type" value="Genomic_DNA"/>
</dbReference>
<dbReference type="SMR" id="Q5UPF0"/>
<dbReference type="KEGG" id="vg:9924667"/>
<dbReference type="Proteomes" id="UP000001134">
    <property type="component" value="Genome"/>
</dbReference>
<keyword id="KW-1185">Reference proteome</keyword>
<gene>
    <name type="ordered locus">MIMI_R73</name>
</gene>
<accession>Q5UPF0</accession>
<organismHost>
    <name type="scientific">Acanthamoeba polyphaga</name>
    <name type="common">Amoeba</name>
    <dbReference type="NCBI Taxonomy" id="5757"/>
</organismHost>
<protein>
    <recommendedName>
        <fullName>Uncharacterized protein R73</fullName>
    </recommendedName>
</protein>